<dbReference type="EMBL" id="AY653733">
    <property type="protein sequence ID" value="AAV50752.1"/>
    <property type="molecule type" value="Genomic_DNA"/>
</dbReference>
<dbReference type="SMR" id="Q5UQG0"/>
<dbReference type="KEGG" id="vg:9925114"/>
<dbReference type="OrthoDB" id="26431at10239"/>
<dbReference type="Proteomes" id="UP000001134">
    <property type="component" value="Genome"/>
</dbReference>
<dbReference type="GO" id="GO:0005576">
    <property type="term" value="C:extracellular region"/>
    <property type="evidence" value="ECO:0007669"/>
    <property type="project" value="UniProtKB-SubCell"/>
</dbReference>
<dbReference type="GO" id="GO:0044423">
    <property type="term" value="C:virion component"/>
    <property type="evidence" value="ECO:0007669"/>
    <property type="project" value="UniProtKB-KW"/>
</dbReference>
<dbReference type="Gene3D" id="3.50.4.10">
    <property type="entry name" value="Hepatocyte Growth Factor"/>
    <property type="match status" value="2"/>
</dbReference>
<dbReference type="InterPro" id="IPR003609">
    <property type="entry name" value="Pan_app"/>
</dbReference>
<dbReference type="Pfam" id="PF00024">
    <property type="entry name" value="PAN_1"/>
    <property type="match status" value="2"/>
</dbReference>
<dbReference type="SUPFAM" id="SSF57414">
    <property type="entry name" value="Hairpin loop containing domain-like"/>
    <property type="match status" value="2"/>
</dbReference>
<dbReference type="PROSITE" id="PS50948">
    <property type="entry name" value="PAN"/>
    <property type="match status" value="2"/>
</dbReference>
<organism>
    <name type="scientific">Acanthamoeba polyphaga mimivirus</name>
    <name type="common">APMV</name>
    <dbReference type="NCBI Taxonomy" id="212035"/>
    <lineage>
        <taxon>Viruses</taxon>
        <taxon>Varidnaviria</taxon>
        <taxon>Bamfordvirae</taxon>
        <taxon>Nucleocytoviricota</taxon>
        <taxon>Megaviricetes</taxon>
        <taxon>Imitervirales</taxon>
        <taxon>Mimiviridae</taxon>
        <taxon>Megamimivirinae</taxon>
        <taxon>Mimivirus</taxon>
        <taxon>Mimivirus bradfordmassiliense</taxon>
    </lineage>
</organism>
<evidence type="ECO:0000255" key="1"/>
<evidence type="ECO:0000255" key="2">
    <source>
        <dbReference type="PROSITE-ProRule" id="PRU00315"/>
    </source>
</evidence>
<evidence type="ECO:0000256" key="3">
    <source>
        <dbReference type="SAM" id="MobiDB-lite"/>
    </source>
</evidence>
<evidence type="ECO:0000269" key="4">
    <source>
    </source>
</evidence>
<evidence type="ECO:0000305" key="5"/>
<name>YR486_MIMIV</name>
<organismHost>
    <name type="scientific">Acanthamoeba polyphaga</name>
    <name type="common">Amoeba</name>
    <dbReference type="NCBI Taxonomy" id="5757"/>
</organismHost>
<keyword id="KW-1015">Disulfide bond</keyword>
<keyword id="KW-0325">Glycoprotein</keyword>
<keyword id="KW-1185">Reference proteome</keyword>
<keyword id="KW-0677">Repeat</keyword>
<keyword id="KW-0964">Secreted</keyword>
<keyword id="KW-0732">Signal</keyword>
<keyword id="KW-0946">Virion</keyword>
<proteinExistence type="evidence at protein level"/>
<reference key="1">
    <citation type="journal article" date="2004" name="Science">
        <title>The 1.2-megabase genome sequence of Mimivirus.</title>
        <authorList>
            <person name="Raoult D."/>
            <person name="Audic S."/>
            <person name="Robert C."/>
            <person name="Abergel C."/>
            <person name="Renesto P."/>
            <person name="Ogata H."/>
            <person name="La Scola B."/>
            <person name="Susan M."/>
            <person name="Claverie J.-M."/>
        </authorList>
    </citation>
    <scope>NUCLEOTIDE SEQUENCE [LARGE SCALE GENOMIC DNA]</scope>
    <source>
        <strain>Rowbotham-Bradford</strain>
    </source>
</reference>
<reference key="2">
    <citation type="journal article" date="2006" name="J. Virol.">
        <title>Mimivirus giant particles incorporate a large fraction of anonymous and unique gene products.</title>
        <authorList>
            <person name="Renesto P."/>
            <person name="Abergel C."/>
            <person name="Decloquement P."/>
            <person name="Moinier D."/>
            <person name="Azza S."/>
            <person name="Ogata H."/>
            <person name="Fourquet P."/>
            <person name="Gorvel J.-P."/>
            <person name="Claverie J.-M."/>
            <person name="Raoult D."/>
        </authorList>
    </citation>
    <scope>IDENTIFICATION BY MASS SPECTROMETRY [LARGE SCALE ANALYSIS]</scope>
    <scope>SUBCELLULAR LOCATION</scope>
</reference>
<feature type="signal peptide" evidence="1">
    <location>
        <begin position="1"/>
        <end position="23"/>
    </location>
</feature>
<feature type="chain" id="PRO_0000244045" description="Putative PAN domain-containing protein R486">
    <location>
        <begin position="24"/>
        <end position="223"/>
    </location>
</feature>
<feature type="domain" description="PAN 1" evidence="2">
    <location>
        <begin position="80"/>
        <end position="155"/>
    </location>
</feature>
<feature type="domain" description="PAN 2" evidence="2">
    <location>
        <begin position="159"/>
        <end position="223"/>
    </location>
</feature>
<feature type="region of interest" description="Disordered" evidence="3">
    <location>
        <begin position="39"/>
        <end position="73"/>
    </location>
</feature>
<feature type="compositionally biased region" description="Low complexity" evidence="3">
    <location>
        <begin position="45"/>
        <end position="64"/>
    </location>
</feature>
<feature type="glycosylation site" description="N-linked (GlcNAc...) asparagine; by host" evidence="1">
    <location>
        <position position="162"/>
    </location>
</feature>
<feature type="glycosylation site" description="N-linked (GlcNAc...) asparagine; by host" evidence="1">
    <location>
        <position position="189"/>
    </location>
</feature>
<feature type="glycosylation site" description="N-linked (GlcNAc...) asparagine; by host" evidence="1">
    <location>
        <position position="213"/>
    </location>
</feature>
<feature type="disulfide bond" evidence="2">
    <location>
        <begin position="80"/>
        <end position="155"/>
    </location>
</feature>
<feature type="disulfide bond" evidence="2">
    <location>
        <begin position="109"/>
        <end position="131"/>
    </location>
</feature>
<feature type="disulfide bond" evidence="2">
    <location>
        <begin position="182"/>
        <end position="204"/>
    </location>
</feature>
<protein>
    <recommendedName>
        <fullName>Putative PAN domain-containing protein R486</fullName>
    </recommendedName>
</protein>
<gene>
    <name type="ordered locus">MIMI_R486</name>
</gene>
<comment type="subcellular location">
    <subcellularLocation>
        <location evidence="5">Secreted</location>
    </subcellularLocation>
    <subcellularLocation>
        <location evidence="4">Virion</location>
    </subcellularLocation>
</comment>
<sequence>MSQTAIIIWIVVIIILLVLGGLGAYFFYSRYRHRKNIPPTPINPPSSITPIQPINPPSSITPIQPSGPPSGGNHPIPASCPAYQLVNNKAITLVPLPADTSNVKNAQDCQNLCTQNPDCYFYNYVGLFDGCSLMQGTVDNNVMTGFAIRGSEDGCPKWARYNTSIQGFNTGNPSNVESEEKCQQLCQQNSSCDWYTYDIGKKTCTLNKAIDFNTSTLGIKMPH</sequence>
<accession>Q5UQG0</accession>